<gene>
    <name evidence="1" type="primary">fusA</name>
    <name type="ordered locus">EAT1b_1637</name>
</gene>
<sequence length="692" mass="76519">MAREFSLKNTRNIGIMAHIDAGKTTTTERILYYTGRIHKIGETHEGASQMDWMEQEQERGITITSAATTAQWNGHRVNIIDTPGHVDFTVEVERSLRVLDGAVAVLDAQSGVEPQTETVWRQATTYGVPRVVFVNKMDKIGADFLYSVKTLHDRLQANAYAIQLPIGAEDDFKGIIDLVEMKTYMYNNDLGTDIEVTDGFPADMADQAEELRGQLIEGVADFNEELMMKYLEGEEISIDELKAAIRQATLSVEFYPVLVGSAFKNKGVQLMLNAVVDYLPSPVDVESIKGINLDTEEEITREPSDEAPFSALAFKVMTDPYVGKLTFFRVYSGTAEAGSYVKNSTKGKRERLGRILQMHANSREEIPMVFAGDIAAAVGFKDTTTGDTLCSEKDNIVLESMTFPEPVISVAIEPKSKADQDKMGQALAKLAEEDPTFRTETNPETGQTIISGMGELHLDILVDRMRREFKVEANVGAPQVAYRETIRGAAKIDSKFVRQSGGRGQYGHVVVEFEPNEEGAGFEFENKIVGGVVPREYVPAVQNGIEEALENGILAGYPVVDVKARLVFGSYHDVDSNEMAFKVAASMAVKQLKDQAKAVILEPMMRVEVVIPEEYMGDIMGDVTSRRGRVEGMEARGNAQVVKAMIPLSEMFGYATSLRSRTQGRGTYSMHFDHYEEVPKSIAEEIVKKANG</sequence>
<organism>
    <name type="scientific">Exiguobacterium sp. (strain ATCC BAA-1283 / AT1b)</name>
    <dbReference type="NCBI Taxonomy" id="360911"/>
    <lineage>
        <taxon>Bacteria</taxon>
        <taxon>Bacillati</taxon>
        <taxon>Bacillota</taxon>
        <taxon>Bacilli</taxon>
        <taxon>Bacillales</taxon>
        <taxon>Bacillales Family XII. Incertae Sedis</taxon>
        <taxon>Exiguobacterium</taxon>
    </lineage>
</organism>
<evidence type="ECO:0000255" key="1">
    <source>
        <dbReference type="HAMAP-Rule" id="MF_00054"/>
    </source>
</evidence>
<accession>C4KZQ0</accession>
<comment type="function">
    <text evidence="1">Catalyzes the GTP-dependent ribosomal translocation step during translation elongation. During this step, the ribosome changes from the pre-translocational (PRE) to the post-translocational (POST) state as the newly formed A-site-bound peptidyl-tRNA and P-site-bound deacylated tRNA move to the P and E sites, respectively. Catalyzes the coordinated movement of the two tRNA molecules, the mRNA and conformational changes in the ribosome.</text>
</comment>
<comment type="subcellular location">
    <subcellularLocation>
        <location evidence="1">Cytoplasm</location>
    </subcellularLocation>
</comment>
<comment type="similarity">
    <text evidence="1">Belongs to the TRAFAC class translation factor GTPase superfamily. Classic translation factor GTPase family. EF-G/EF-2 subfamily.</text>
</comment>
<dbReference type="EMBL" id="CP001615">
    <property type="protein sequence ID" value="ACQ70563.1"/>
    <property type="molecule type" value="Genomic_DNA"/>
</dbReference>
<dbReference type="RefSeq" id="WP_012727681.1">
    <property type="nucleotide sequence ID" value="NC_012673.1"/>
</dbReference>
<dbReference type="SMR" id="C4KZQ0"/>
<dbReference type="STRING" id="360911.EAT1b_1637"/>
<dbReference type="GeneID" id="94370739"/>
<dbReference type="KEGG" id="eat:EAT1b_1637"/>
<dbReference type="eggNOG" id="COG0480">
    <property type="taxonomic scope" value="Bacteria"/>
</dbReference>
<dbReference type="HOGENOM" id="CLU_002794_4_1_9"/>
<dbReference type="OrthoDB" id="9804431at2"/>
<dbReference type="Proteomes" id="UP000000716">
    <property type="component" value="Chromosome"/>
</dbReference>
<dbReference type="GO" id="GO:0005737">
    <property type="term" value="C:cytoplasm"/>
    <property type="evidence" value="ECO:0007669"/>
    <property type="project" value="UniProtKB-SubCell"/>
</dbReference>
<dbReference type="GO" id="GO:0005525">
    <property type="term" value="F:GTP binding"/>
    <property type="evidence" value="ECO:0007669"/>
    <property type="project" value="UniProtKB-UniRule"/>
</dbReference>
<dbReference type="GO" id="GO:0003924">
    <property type="term" value="F:GTPase activity"/>
    <property type="evidence" value="ECO:0007669"/>
    <property type="project" value="InterPro"/>
</dbReference>
<dbReference type="GO" id="GO:0003746">
    <property type="term" value="F:translation elongation factor activity"/>
    <property type="evidence" value="ECO:0007669"/>
    <property type="project" value="UniProtKB-UniRule"/>
</dbReference>
<dbReference type="GO" id="GO:0032790">
    <property type="term" value="P:ribosome disassembly"/>
    <property type="evidence" value="ECO:0007669"/>
    <property type="project" value="TreeGrafter"/>
</dbReference>
<dbReference type="CDD" id="cd01886">
    <property type="entry name" value="EF-G"/>
    <property type="match status" value="1"/>
</dbReference>
<dbReference type="CDD" id="cd16262">
    <property type="entry name" value="EFG_III"/>
    <property type="match status" value="1"/>
</dbReference>
<dbReference type="CDD" id="cd01434">
    <property type="entry name" value="EFG_mtEFG1_IV"/>
    <property type="match status" value="1"/>
</dbReference>
<dbReference type="CDD" id="cd03713">
    <property type="entry name" value="EFG_mtEFG_C"/>
    <property type="match status" value="1"/>
</dbReference>
<dbReference type="CDD" id="cd04088">
    <property type="entry name" value="EFG_mtEFG_II"/>
    <property type="match status" value="1"/>
</dbReference>
<dbReference type="FunFam" id="2.40.30.10:FF:000006">
    <property type="entry name" value="Elongation factor G"/>
    <property type="match status" value="1"/>
</dbReference>
<dbReference type="FunFam" id="3.30.230.10:FF:000003">
    <property type="entry name" value="Elongation factor G"/>
    <property type="match status" value="1"/>
</dbReference>
<dbReference type="FunFam" id="3.30.70.240:FF:000001">
    <property type="entry name" value="Elongation factor G"/>
    <property type="match status" value="1"/>
</dbReference>
<dbReference type="FunFam" id="3.30.70.870:FF:000001">
    <property type="entry name" value="Elongation factor G"/>
    <property type="match status" value="1"/>
</dbReference>
<dbReference type="FunFam" id="3.40.50.300:FF:000029">
    <property type="entry name" value="Elongation factor G"/>
    <property type="match status" value="1"/>
</dbReference>
<dbReference type="Gene3D" id="3.30.230.10">
    <property type="match status" value="1"/>
</dbReference>
<dbReference type="Gene3D" id="3.30.70.240">
    <property type="match status" value="1"/>
</dbReference>
<dbReference type="Gene3D" id="3.30.70.870">
    <property type="entry name" value="Elongation Factor G (Translational Gtpase), domain 3"/>
    <property type="match status" value="1"/>
</dbReference>
<dbReference type="Gene3D" id="3.40.50.300">
    <property type="entry name" value="P-loop containing nucleotide triphosphate hydrolases"/>
    <property type="match status" value="1"/>
</dbReference>
<dbReference type="Gene3D" id="2.40.30.10">
    <property type="entry name" value="Translation factors"/>
    <property type="match status" value="1"/>
</dbReference>
<dbReference type="HAMAP" id="MF_00054_B">
    <property type="entry name" value="EF_G_EF_2_B"/>
    <property type="match status" value="1"/>
</dbReference>
<dbReference type="InterPro" id="IPR041095">
    <property type="entry name" value="EFG_II"/>
</dbReference>
<dbReference type="InterPro" id="IPR009022">
    <property type="entry name" value="EFG_III"/>
</dbReference>
<dbReference type="InterPro" id="IPR035647">
    <property type="entry name" value="EFG_III/V"/>
</dbReference>
<dbReference type="InterPro" id="IPR047872">
    <property type="entry name" value="EFG_IV"/>
</dbReference>
<dbReference type="InterPro" id="IPR035649">
    <property type="entry name" value="EFG_V"/>
</dbReference>
<dbReference type="InterPro" id="IPR000640">
    <property type="entry name" value="EFG_V-like"/>
</dbReference>
<dbReference type="InterPro" id="IPR004161">
    <property type="entry name" value="EFTu-like_2"/>
</dbReference>
<dbReference type="InterPro" id="IPR031157">
    <property type="entry name" value="G_TR_CS"/>
</dbReference>
<dbReference type="InterPro" id="IPR027417">
    <property type="entry name" value="P-loop_NTPase"/>
</dbReference>
<dbReference type="InterPro" id="IPR020568">
    <property type="entry name" value="Ribosomal_Su5_D2-typ_SF"/>
</dbReference>
<dbReference type="InterPro" id="IPR014721">
    <property type="entry name" value="Ribsml_uS5_D2-typ_fold_subgr"/>
</dbReference>
<dbReference type="InterPro" id="IPR005225">
    <property type="entry name" value="Small_GTP-bd"/>
</dbReference>
<dbReference type="InterPro" id="IPR000795">
    <property type="entry name" value="T_Tr_GTP-bd_dom"/>
</dbReference>
<dbReference type="InterPro" id="IPR009000">
    <property type="entry name" value="Transl_B-barrel_sf"/>
</dbReference>
<dbReference type="InterPro" id="IPR004540">
    <property type="entry name" value="Transl_elong_EFG/EF2"/>
</dbReference>
<dbReference type="InterPro" id="IPR005517">
    <property type="entry name" value="Transl_elong_EFG/EF2_IV"/>
</dbReference>
<dbReference type="NCBIfam" id="TIGR00484">
    <property type="entry name" value="EF-G"/>
    <property type="match status" value="1"/>
</dbReference>
<dbReference type="NCBIfam" id="NF009379">
    <property type="entry name" value="PRK12740.1-3"/>
    <property type="match status" value="1"/>
</dbReference>
<dbReference type="NCBIfam" id="NF009381">
    <property type="entry name" value="PRK12740.1-5"/>
    <property type="match status" value="1"/>
</dbReference>
<dbReference type="NCBIfam" id="TIGR00231">
    <property type="entry name" value="small_GTP"/>
    <property type="match status" value="1"/>
</dbReference>
<dbReference type="PANTHER" id="PTHR43261:SF1">
    <property type="entry name" value="RIBOSOME-RELEASING FACTOR 2, MITOCHONDRIAL"/>
    <property type="match status" value="1"/>
</dbReference>
<dbReference type="PANTHER" id="PTHR43261">
    <property type="entry name" value="TRANSLATION ELONGATION FACTOR G-RELATED"/>
    <property type="match status" value="1"/>
</dbReference>
<dbReference type="Pfam" id="PF00679">
    <property type="entry name" value="EFG_C"/>
    <property type="match status" value="1"/>
</dbReference>
<dbReference type="Pfam" id="PF14492">
    <property type="entry name" value="EFG_III"/>
    <property type="match status" value="1"/>
</dbReference>
<dbReference type="Pfam" id="PF03764">
    <property type="entry name" value="EFG_IV"/>
    <property type="match status" value="1"/>
</dbReference>
<dbReference type="Pfam" id="PF00009">
    <property type="entry name" value="GTP_EFTU"/>
    <property type="match status" value="1"/>
</dbReference>
<dbReference type="Pfam" id="PF03144">
    <property type="entry name" value="GTP_EFTU_D2"/>
    <property type="match status" value="1"/>
</dbReference>
<dbReference type="PRINTS" id="PR00315">
    <property type="entry name" value="ELONGATNFCT"/>
</dbReference>
<dbReference type="SMART" id="SM00838">
    <property type="entry name" value="EFG_C"/>
    <property type="match status" value="1"/>
</dbReference>
<dbReference type="SMART" id="SM00889">
    <property type="entry name" value="EFG_IV"/>
    <property type="match status" value="1"/>
</dbReference>
<dbReference type="SUPFAM" id="SSF54980">
    <property type="entry name" value="EF-G C-terminal domain-like"/>
    <property type="match status" value="2"/>
</dbReference>
<dbReference type="SUPFAM" id="SSF52540">
    <property type="entry name" value="P-loop containing nucleoside triphosphate hydrolases"/>
    <property type="match status" value="1"/>
</dbReference>
<dbReference type="SUPFAM" id="SSF54211">
    <property type="entry name" value="Ribosomal protein S5 domain 2-like"/>
    <property type="match status" value="1"/>
</dbReference>
<dbReference type="SUPFAM" id="SSF50447">
    <property type="entry name" value="Translation proteins"/>
    <property type="match status" value="1"/>
</dbReference>
<dbReference type="PROSITE" id="PS00301">
    <property type="entry name" value="G_TR_1"/>
    <property type="match status" value="1"/>
</dbReference>
<dbReference type="PROSITE" id="PS51722">
    <property type="entry name" value="G_TR_2"/>
    <property type="match status" value="1"/>
</dbReference>
<keyword id="KW-0963">Cytoplasm</keyword>
<keyword id="KW-0251">Elongation factor</keyword>
<keyword id="KW-0342">GTP-binding</keyword>
<keyword id="KW-0547">Nucleotide-binding</keyword>
<keyword id="KW-0648">Protein biosynthesis</keyword>
<reference key="1">
    <citation type="journal article" date="2011" name="J. Bacteriol.">
        <title>Complete genome sequence of the Thermophilic Bacterium Exiguobacterium sp. AT1b.</title>
        <authorList>
            <person name="Vishnivetskaya T.A."/>
            <person name="Lucas S."/>
            <person name="Copeland A."/>
            <person name="Lapidus A."/>
            <person name="Glavina del Rio T."/>
            <person name="Dalin E."/>
            <person name="Tice H."/>
            <person name="Bruce D.C."/>
            <person name="Goodwin L.A."/>
            <person name="Pitluck S."/>
            <person name="Saunders E."/>
            <person name="Brettin T."/>
            <person name="Detter C."/>
            <person name="Han C."/>
            <person name="Larimer F."/>
            <person name="Land M.L."/>
            <person name="Hauser L.J."/>
            <person name="Kyrpides N.C."/>
            <person name="Ovchinnikova G."/>
            <person name="Kathariou S."/>
            <person name="Ramaley R.F."/>
            <person name="Rodrigues D.F."/>
            <person name="Hendrix C."/>
            <person name="Richardson P."/>
            <person name="Tiedje J.M."/>
        </authorList>
    </citation>
    <scope>NUCLEOTIDE SEQUENCE [LARGE SCALE GENOMIC DNA]</scope>
    <source>
        <strain>ATCC BAA-1283 / AT1b</strain>
    </source>
</reference>
<protein>
    <recommendedName>
        <fullName evidence="1">Elongation factor G</fullName>
        <shortName evidence="1">EF-G</shortName>
    </recommendedName>
</protein>
<proteinExistence type="inferred from homology"/>
<feature type="chain" id="PRO_1000202301" description="Elongation factor G">
    <location>
        <begin position="1"/>
        <end position="692"/>
    </location>
</feature>
<feature type="domain" description="tr-type G">
    <location>
        <begin position="8"/>
        <end position="283"/>
    </location>
</feature>
<feature type="binding site" evidence="1">
    <location>
        <begin position="17"/>
        <end position="24"/>
    </location>
    <ligand>
        <name>GTP</name>
        <dbReference type="ChEBI" id="CHEBI:37565"/>
    </ligand>
</feature>
<feature type="binding site" evidence="1">
    <location>
        <begin position="81"/>
        <end position="85"/>
    </location>
    <ligand>
        <name>GTP</name>
        <dbReference type="ChEBI" id="CHEBI:37565"/>
    </ligand>
</feature>
<feature type="binding site" evidence="1">
    <location>
        <begin position="135"/>
        <end position="138"/>
    </location>
    <ligand>
        <name>GTP</name>
        <dbReference type="ChEBI" id="CHEBI:37565"/>
    </ligand>
</feature>
<name>EFG_EXISA</name>